<evidence type="ECO:0000250" key="1"/>
<evidence type="ECO:0000255" key="2"/>
<evidence type="ECO:0000269" key="3">
    <source>
    </source>
</evidence>
<evidence type="ECO:0000305" key="4"/>
<dbReference type="EMBL" id="L23521">
    <property type="protein sequence ID" value="AAA92869.1"/>
    <property type="molecule type" value="Genomic_DNA"/>
</dbReference>
<dbReference type="EMBL" id="X74428">
    <property type="protein sequence ID" value="CAA52447.1"/>
    <property type="molecule type" value="Genomic_DNA"/>
</dbReference>
<dbReference type="EMBL" id="U43491">
    <property type="protein sequence ID" value="AAC49490.1"/>
    <property type="molecule type" value="Genomic_DNA"/>
</dbReference>
<dbReference type="EMBL" id="Z74918">
    <property type="protein sequence ID" value="CAA99198.1"/>
    <property type="molecule type" value="Genomic_DNA"/>
</dbReference>
<dbReference type="EMBL" id="BK006948">
    <property type="protein sequence ID" value="DAA10793.1"/>
    <property type="molecule type" value="Genomic_DNA"/>
</dbReference>
<dbReference type="PIR" id="S61310">
    <property type="entry name" value="S61310"/>
</dbReference>
<dbReference type="RefSeq" id="NP_014653.1">
    <property type="nucleotide sequence ID" value="NM_001183429.1"/>
</dbReference>
<dbReference type="BioGRID" id="34415">
    <property type="interactions" value="58"/>
</dbReference>
<dbReference type="DIP" id="DIP-4194N"/>
<dbReference type="FunCoup" id="P33890">
    <property type="interactions" value="62"/>
</dbReference>
<dbReference type="IntAct" id="P33890">
    <property type="interactions" value="2"/>
</dbReference>
<dbReference type="STRING" id="4932.YOR010C"/>
<dbReference type="PaxDb" id="4932-YOR010C"/>
<dbReference type="PeptideAtlas" id="P33890"/>
<dbReference type="EnsemblFungi" id="YOR010C_mRNA">
    <property type="protein sequence ID" value="YOR010C"/>
    <property type="gene ID" value="YOR010C"/>
</dbReference>
<dbReference type="GeneID" id="854174"/>
<dbReference type="KEGG" id="sce:YOR010C"/>
<dbReference type="AGR" id="SGD:S000005536"/>
<dbReference type="SGD" id="S000005536">
    <property type="gene designation" value="TIR2"/>
</dbReference>
<dbReference type="VEuPathDB" id="FungiDB:YOR010C"/>
<dbReference type="eggNOG" id="ENOG502RYU4">
    <property type="taxonomic scope" value="Eukaryota"/>
</dbReference>
<dbReference type="GeneTree" id="ENSGT00940000176541"/>
<dbReference type="HOGENOM" id="CLU_071083_0_0_1"/>
<dbReference type="InParanoid" id="P33890"/>
<dbReference type="OMA" id="MAYIKIA"/>
<dbReference type="OrthoDB" id="4069694at2759"/>
<dbReference type="BioCyc" id="YEAST:G3O-33560-MONOMER"/>
<dbReference type="BioGRID-ORCS" id="854174">
    <property type="hits" value="0 hits in 10 CRISPR screens"/>
</dbReference>
<dbReference type="PRO" id="PR:P33890"/>
<dbReference type="Proteomes" id="UP000002311">
    <property type="component" value="Chromosome XV"/>
</dbReference>
<dbReference type="RNAct" id="P33890">
    <property type="molecule type" value="protein"/>
</dbReference>
<dbReference type="GO" id="GO:0071944">
    <property type="term" value="C:cell periphery"/>
    <property type="evidence" value="ECO:0007005"/>
    <property type="project" value="SGD"/>
</dbReference>
<dbReference type="GO" id="GO:0005576">
    <property type="term" value="C:extracellular region"/>
    <property type="evidence" value="ECO:0007669"/>
    <property type="project" value="UniProtKB-KW"/>
</dbReference>
<dbReference type="GO" id="GO:0009277">
    <property type="term" value="C:fungal-type cell wall"/>
    <property type="evidence" value="ECO:0000318"/>
    <property type="project" value="GO_Central"/>
</dbReference>
<dbReference type="GO" id="GO:0000324">
    <property type="term" value="C:fungal-type vacuole"/>
    <property type="evidence" value="ECO:0007005"/>
    <property type="project" value="SGD"/>
</dbReference>
<dbReference type="GO" id="GO:0098552">
    <property type="term" value="C:side of membrane"/>
    <property type="evidence" value="ECO:0007669"/>
    <property type="project" value="UniProtKB-KW"/>
</dbReference>
<dbReference type="GO" id="GO:0005199">
    <property type="term" value="F:structural constituent of cell wall"/>
    <property type="evidence" value="ECO:0000318"/>
    <property type="project" value="GO_Central"/>
</dbReference>
<dbReference type="GO" id="GO:0071497">
    <property type="term" value="P:cellular response to freezing"/>
    <property type="evidence" value="ECO:0000314"/>
    <property type="project" value="SGD"/>
</dbReference>
<dbReference type="GO" id="GO:0031505">
    <property type="term" value="P:fungal-type cell wall organization"/>
    <property type="evidence" value="ECO:0000318"/>
    <property type="project" value="GO_Central"/>
</dbReference>
<dbReference type="InterPro" id="IPR000992">
    <property type="entry name" value="SRP1_TIP1"/>
</dbReference>
<dbReference type="InterPro" id="IPR000420">
    <property type="entry name" value="Yeast_PIR_rpt"/>
</dbReference>
<dbReference type="InterPro" id="IPR050788">
    <property type="entry name" value="Yeast_SRP1/TIP1_CWP"/>
</dbReference>
<dbReference type="PANTHER" id="PTHR31002:SF34">
    <property type="entry name" value="CELL WALL PROTEIN CWP1-RELATED"/>
    <property type="match status" value="1"/>
</dbReference>
<dbReference type="PANTHER" id="PTHR31002">
    <property type="entry name" value="SERIPAUPERIN"/>
    <property type="match status" value="1"/>
</dbReference>
<dbReference type="Pfam" id="PF00399">
    <property type="entry name" value="PIR"/>
    <property type="match status" value="1"/>
</dbReference>
<dbReference type="Pfam" id="PF00660">
    <property type="entry name" value="SRP1_TIP1"/>
    <property type="match status" value="1"/>
</dbReference>
<dbReference type="PROSITE" id="PS00929">
    <property type="entry name" value="PIR_REPEAT_1"/>
    <property type="match status" value="1"/>
</dbReference>
<dbReference type="PROSITE" id="PS50256">
    <property type="entry name" value="PIR_REPEAT_2"/>
    <property type="match status" value="1"/>
</dbReference>
<dbReference type="PROSITE" id="PS00724">
    <property type="entry name" value="SRP1_TIP1"/>
    <property type="match status" value="1"/>
</dbReference>
<comment type="function">
    <text evidence="1">Component of the cell wall.</text>
</comment>
<comment type="subcellular location">
    <subcellularLocation>
        <location evidence="1">Secreted</location>
        <location evidence="1">Cell wall</location>
    </subcellularLocation>
    <subcellularLocation>
        <location evidence="4">Membrane</location>
        <topology evidence="4">Lipid-anchor</topology>
        <topology evidence="4">GPI-anchor</topology>
    </subcellularLocation>
</comment>
<comment type="induction">
    <text evidence="3">Induced during anaerobic growth and strongly by cold shock.</text>
</comment>
<comment type="PTM">
    <text evidence="1">The GPI-anchor is attached to the protein in the endoplasmic reticulum and serves to target the protein to the cell surface. There, the glucosamine-inositol phospholipid moiety is cleaved off and the GPI-modified mannoprotein is covalently attached via its lipidless GPI glycan remnant to the 1,6-beta-glucan of the outer cell wall layer (By similarity).</text>
</comment>
<comment type="PTM">
    <text evidence="1">Covalently linked to beta-1,3-glucan of the inner cell wall layer via an alkali-sensitive ester linkage between the gamma-carboxyl group of glutamic acids, arising from a specific glutamine within the PIR1/2/3 repeat, and hydroxyl groups of glucoses of beta-1,3-glucan chains.</text>
</comment>
<comment type="similarity">
    <text evidence="4">Belongs to the SRP1/TIP1 family.</text>
</comment>
<gene>
    <name type="primary">TIR2</name>
    <name type="synonym">SRP2</name>
    <name type="ordered locus">YOR010C</name>
    <name type="ORF">O2553</name>
    <name type="ORF">UND251</name>
</gene>
<accession>P33890</accession>
<accession>D6W277</accession>
<organism>
    <name type="scientific">Saccharomyces cerevisiae (strain ATCC 204508 / S288c)</name>
    <name type="common">Baker's yeast</name>
    <dbReference type="NCBI Taxonomy" id="559292"/>
    <lineage>
        <taxon>Eukaryota</taxon>
        <taxon>Fungi</taxon>
        <taxon>Dikarya</taxon>
        <taxon>Ascomycota</taxon>
        <taxon>Saccharomycotina</taxon>
        <taxon>Saccharomycetes</taxon>
        <taxon>Saccharomycetales</taxon>
        <taxon>Saccharomycetaceae</taxon>
        <taxon>Saccharomyces</taxon>
    </lineage>
</organism>
<protein>
    <recommendedName>
        <fullName>Cold shock-induced protein TIR2</fullName>
    </recommendedName>
    <alternativeName>
        <fullName>Serine-rich protein 2</fullName>
    </alternativeName>
    <alternativeName>
        <fullName>TIP1-related protein 2</fullName>
    </alternativeName>
</protein>
<name>TIR2_YEAST</name>
<reference key="1">
    <citation type="journal article" date="1995" name="Mol. Microbiol.">
        <title>Cold-shock induction of a family of TIP1-related proteins associated with the membrane in Saccharomyces cerevisiae.</title>
        <authorList>
            <person name="Kowalski L.R.Z."/>
            <person name="Kondo K."/>
            <person name="Inouye M."/>
        </authorList>
    </citation>
    <scope>NUCLEOTIDE SEQUENCE [GENOMIC DNA]</scope>
</reference>
<reference key="2">
    <citation type="submission" date="1993-08" db="EMBL/GenBank/DDBJ databases">
        <authorList>
            <person name="Donzeau M."/>
            <person name="Fantino E."/>
            <person name="Lauquin G."/>
        </authorList>
    </citation>
    <scope>NUCLEOTIDE SEQUENCE [GENOMIC DNA]</scope>
    <source>
        <strain>YPH148</strain>
    </source>
</reference>
<reference key="3">
    <citation type="journal article" date="1996" name="Yeast">
        <title>The sequence of a 30 kb fragment on the left arm of chromosome XV from Saccharomyces cerevisiae reveals 15 open reading frames, five of which correspond to previously identified genes.</title>
        <authorList>
            <person name="Sterky F."/>
            <person name="Holmberg A."/>
            <person name="Pettersson B."/>
            <person name="Uhlen M."/>
        </authorList>
    </citation>
    <scope>NUCLEOTIDE SEQUENCE [GENOMIC DNA]</scope>
</reference>
<reference key="4">
    <citation type="journal article" date="1997" name="Nature">
        <title>The nucleotide sequence of Saccharomyces cerevisiae chromosome XV.</title>
        <authorList>
            <person name="Dujon B."/>
            <person name="Albermann K."/>
            <person name="Aldea M."/>
            <person name="Alexandraki D."/>
            <person name="Ansorge W."/>
            <person name="Arino J."/>
            <person name="Benes V."/>
            <person name="Bohn C."/>
            <person name="Bolotin-Fukuhara M."/>
            <person name="Bordonne R."/>
            <person name="Boyer J."/>
            <person name="Camasses A."/>
            <person name="Casamayor A."/>
            <person name="Casas C."/>
            <person name="Cheret G."/>
            <person name="Cziepluch C."/>
            <person name="Daignan-Fornier B."/>
            <person name="Dang V.-D."/>
            <person name="de Haan M."/>
            <person name="Delius H."/>
            <person name="Durand P."/>
            <person name="Fairhead C."/>
            <person name="Feldmann H."/>
            <person name="Gaillon L."/>
            <person name="Galisson F."/>
            <person name="Gamo F.-J."/>
            <person name="Gancedo C."/>
            <person name="Goffeau A."/>
            <person name="Goulding S.E."/>
            <person name="Grivell L.A."/>
            <person name="Habbig B."/>
            <person name="Hand N.J."/>
            <person name="Hani J."/>
            <person name="Hattenhorst U."/>
            <person name="Hebling U."/>
            <person name="Hernando Y."/>
            <person name="Herrero E."/>
            <person name="Heumann K."/>
            <person name="Hiesel R."/>
            <person name="Hilger F."/>
            <person name="Hofmann B."/>
            <person name="Hollenberg C.P."/>
            <person name="Hughes B."/>
            <person name="Jauniaux J.-C."/>
            <person name="Kalogeropoulos A."/>
            <person name="Katsoulou C."/>
            <person name="Kordes E."/>
            <person name="Lafuente M.J."/>
            <person name="Landt O."/>
            <person name="Louis E.J."/>
            <person name="Maarse A.C."/>
            <person name="Madania A."/>
            <person name="Mannhaupt G."/>
            <person name="Marck C."/>
            <person name="Martin R.P."/>
            <person name="Mewes H.-W."/>
            <person name="Michaux G."/>
            <person name="Paces V."/>
            <person name="Parle-McDermott A.G."/>
            <person name="Pearson B.M."/>
            <person name="Perrin A."/>
            <person name="Pettersson B."/>
            <person name="Poch O."/>
            <person name="Pohl T.M."/>
            <person name="Poirey R."/>
            <person name="Portetelle D."/>
            <person name="Pujol A."/>
            <person name="Purnelle B."/>
            <person name="Ramezani Rad M."/>
            <person name="Rechmann S."/>
            <person name="Schwager C."/>
            <person name="Schweizer M."/>
            <person name="Sor F."/>
            <person name="Sterky F."/>
            <person name="Tarassov I.A."/>
            <person name="Teodoru C."/>
            <person name="Tettelin H."/>
            <person name="Thierry A."/>
            <person name="Tobiasch E."/>
            <person name="Tzermia M."/>
            <person name="Uhlen M."/>
            <person name="Unseld M."/>
            <person name="Valens M."/>
            <person name="Vandenbol M."/>
            <person name="Vetter I."/>
            <person name="Vlcek C."/>
            <person name="Voet M."/>
            <person name="Volckaert G."/>
            <person name="Voss H."/>
            <person name="Wambutt R."/>
            <person name="Wedler H."/>
            <person name="Wiemann S."/>
            <person name="Winsor B."/>
            <person name="Wolfe K.H."/>
            <person name="Zollner A."/>
            <person name="Zumstein E."/>
            <person name="Kleine K."/>
        </authorList>
    </citation>
    <scope>NUCLEOTIDE SEQUENCE [LARGE SCALE GENOMIC DNA]</scope>
    <source>
        <strain>ATCC 204508 / S288c</strain>
    </source>
</reference>
<reference key="5">
    <citation type="journal article" date="2014" name="G3 (Bethesda)">
        <title>The reference genome sequence of Saccharomyces cerevisiae: Then and now.</title>
        <authorList>
            <person name="Engel S.R."/>
            <person name="Dietrich F.S."/>
            <person name="Fisk D.G."/>
            <person name="Binkley G."/>
            <person name="Balakrishnan R."/>
            <person name="Costanzo M.C."/>
            <person name="Dwight S.S."/>
            <person name="Hitz B.C."/>
            <person name="Karra K."/>
            <person name="Nash R.S."/>
            <person name="Weng S."/>
            <person name="Wong E.D."/>
            <person name="Lloyd P."/>
            <person name="Skrzypek M.S."/>
            <person name="Miyasato S.R."/>
            <person name="Simison M."/>
            <person name="Cherry J.M."/>
        </authorList>
    </citation>
    <scope>GENOME REANNOTATION</scope>
    <source>
        <strain>ATCC 204508 / S288c</strain>
    </source>
</reference>
<reference key="6">
    <citation type="journal article" date="2001" name="J. Bacteriol.">
        <title>Reciprocal regulation of anaerobic and aerobic cell wall mannoprotein gene expression in Saccharomyces cerevisiae.</title>
        <authorList>
            <person name="Abramova N.E."/>
            <person name="Sertil O."/>
            <person name="Mehta S."/>
            <person name="Lowry C.V."/>
        </authorList>
    </citation>
    <scope>INDUCTION</scope>
</reference>
<keyword id="KW-0134">Cell wall</keyword>
<keyword id="KW-0325">Glycoprotein</keyword>
<keyword id="KW-0336">GPI-anchor</keyword>
<keyword id="KW-0449">Lipoprotein</keyword>
<keyword id="KW-0472">Membrane</keyword>
<keyword id="KW-1185">Reference proteome</keyword>
<keyword id="KW-0964">Secreted</keyword>
<keyword id="KW-0732">Signal</keyword>
<keyword id="KW-0346">Stress response</keyword>
<feature type="signal peptide" evidence="2">
    <location>
        <begin position="1"/>
        <end position="18"/>
    </location>
</feature>
<feature type="chain" id="PRO_0000033235" description="Cold shock-induced protein TIR2">
    <location>
        <begin position="19"/>
        <end position="231"/>
    </location>
</feature>
<feature type="propeptide" id="PRO_0000372445" description="Removed in mature form" evidence="2">
    <location>
        <begin position="232"/>
        <end position="251"/>
    </location>
</feature>
<feature type="repeat" description="PIR1/2/3">
    <location>
        <begin position="207"/>
        <end position="225"/>
    </location>
</feature>
<feature type="site" description="Covalent attachment to cell wall glycan" evidence="1">
    <location>
        <position position="217"/>
    </location>
</feature>
<feature type="lipid moiety-binding region" description="GPI-anchor amidated glycine" evidence="2">
    <location>
        <position position="231"/>
    </location>
</feature>
<feature type="sequence conflict" description="In Ref. 2; CAA52447." evidence="4" ref="2">
    <location>
        <position position="69"/>
    </location>
</feature>
<feature type="sequence conflict" description="In Ref. 2; CAA52447." evidence="4" ref="2">
    <original>T</original>
    <variation>A</variation>
    <location>
        <position position="179"/>
    </location>
</feature>
<feature type="sequence conflict" description="In Ref. 2; CAA52447." evidence="4" ref="2">
    <original>A</original>
    <variation>V</variation>
    <location>
        <position position="192"/>
    </location>
</feature>
<sequence length="251" mass="24628">MAYIKIALLAAIAALASAQTQEEIDELNVILNDVKSNLQEYISLAEDSSSGFSLSSLPSGVLDIGLALASATDDSYTTLYSEVDFAAVSKMLTMVPWYSSRLLPELESLLGTSTTAASSTEASSAATSSAVASSSETTSSAVASSSEATSSAVASSSEASSSAATSSAVASSSEATSSTVASSTKAASSTKASSSAVSSAVASSTKASAISQISDGQVQATSTVSEQTENGAAKAVIGMGAGVMAAAAMLL</sequence>
<proteinExistence type="evidence at transcript level"/>